<comment type="subcellular location">
    <subcellularLocation>
        <location evidence="2">Secreted</location>
    </subcellularLocation>
</comment>
<comment type="tissue specificity">
    <text>Kidney, submaxillary gland, urine.</text>
</comment>
<comment type="induction">
    <text>By androgens.</text>
</comment>
<name>ANRE_MOUSE</name>
<dbReference type="EMBL" id="M22810">
    <property type="protein sequence ID" value="AAB01364.1"/>
    <property type="molecule type" value="mRNA"/>
</dbReference>
<dbReference type="EMBL" id="M63707">
    <property type="protein sequence ID" value="AAB01363.1"/>
    <property type="molecule type" value="Genomic_DNA"/>
</dbReference>
<dbReference type="EMBL" id="BC013453">
    <property type="protein sequence ID" value="AAH13453.1"/>
    <property type="molecule type" value="mRNA"/>
</dbReference>
<dbReference type="CCDS" id="CCDS20635.1"/>
<dbReference type="PIR" id="A40157">
    <property type="entry name" value="A40157"/>
</dbReference>
<dbReference type="RefSeq" id="NP_034724.1">
    <property type="nucleotide sequence ID" value="NM_010594.2"/>
</dbReference>
<dbReference type="SMR" id="P61110"/>
<dbReference type="STRING" id="10090.ENSMUSP00000041060"/>
<dbReference type="iPTMnet" id="P61110"/>
<dbReference type="PhosphoSitePlus" id="P61110"/>
<dbReference type="jPOST" id="P61110"/>
<dbReference type="PaxDb" id="10090-ENSMUSP00000041060"/>
<dbReference type="PeptideAtlas" id="P61110"/>
<dbReference type="DNASU" id="16483"/>
<dbReference type="Ensembl" id="ENSMUST00000048032.5">
    <property type="protein sequence ID" value="ENSMUSP00000041060.3"/>
    <property type="gene ID" value="ENSMUSG00000032758.5"/>
</dbReference>
<dbReference type="GeneID" id="16483"/>
<dbReference type="KEGG" id="mmu:16483"/>
<dbReference type="UCSC" id="uc009ekd.1">
    <property type="organism name" value="mouse"/>
</dbReference>
<dbReference type="AGR" id="MGI:96653"/>
<dbReference type="CTD" id="16483"/>
<dbReference type="MGI" id="MGI:96653">
    <property type="gene designation" value="Kap"/>
</dbReference>
<dbReference type="VEuPathDB" id="HostDB:ENSMUSG00000032758"/>
<dbReference type="GeneTree" id="ENSGT00520000057923"/>
<dbReference type="HOGENOM" id="CLU_2048990_0_0_1"/>
<dbReference type="InParanoid" id="P61110"/>
<dbReference type="OMA" id="MICKVLV"/>
<dbReference type="OrthoDB" id="10340904at2759"/>
<dbReference type="PhylomeDB" id="P61110"/>
<dbReference type="BioGRID-ORCS" id="16483">
    <property type="hits" value="2 hits in 76 CRISPR screens"/>
</dbReference>
<dbReference type="ChiTaRS" id="Kap">
    <property type="organism name" value="mouse"/>
</dbReference>
<dbReference type="PRO" id="PR:P61110"/>
<dbReference type="Proteomes" id="UP000000589">
    <property type="component" value="Chromosome 6"/>
</dbReference>
<dbReference type="RNAct" id="P61110">
    <property type="molecule type" value="protein"/>
</dbReference>
<dbReference type="Bgee" id="ENSMUSG00000032758">
    <property type="expression patterns" value="Expressed in right kidney and 131 other cell types or tissues"/>
</dbReference>
<dbReference type="ExpressionAtlas" id="P61110">
    <property type="expression patterns" value="baseline and differential"/>
</dbReference>
<dbReference type="GO" id="GO:0005576">
    <property type="term" value="C:extracellular region"/>
    <property type="evidence" value="ECO:0007669"/>
    <property type="project" value="UniProtKB-SubCell"/>
</dbReference>
<dbReference type="InterPro" id="IPR028062">
    <property type="entry name" value="KAR_prot"/>
</dbReference>
<dbReference type="Pfam" id="PF15222">
    <property type="entry name" value="KAR"/>
    <property type="match status" value="1"/>
</dbReference>
<accession>P61110</accession>
<accession>P15267</accession>
<evidence type="ECO:0000255" key="1"/>
<evidence type="ECO:0000305" key="2"/>
<gene>
    <name type="primary">Kap</name>
</gene>
<reference key="1">
    <citation type="journal article" date="1989" name="Mol. Endocrinol.">
        <title>Nucleotide sequence of kidney androgen-regulated protein mRNA and its cell-specific expression in Tfm/Y mice.</title>
        <authorList>
            <person name="Meseguer A."/>
            <person name="Watson C.S."/>
            <person name="Catterall J.F."/>
        </authorList>
    </citation>
    <scope>NUCLEOTIDE SEQUENCE [MRNA]</scope>
</reference>
<reference key="2">
    <citation type="journal article" date="1991" name="DNA Cell Biol.">
        <title>Genomic organization and DNA sequence of the mouse kidney androgen-regulated protein (KAP) gene.</title>
        <authorList>
            <person name="Niu E.M."/>
            <person name="Meseguer A."/>
            <person name="Catterall J.F."/>
        </authorList>
    </citation>
    <scope>NUCLEOTIDE SEQUENCE [GENOMIC DNA]</scope>
</reference>
<reference key="3">
    <citation type="journal article" date="2004" name="Genome Res.">
        <title>The status, quality, and expansion of the NIH full-length cDNA project: the Mammalian Gene Collection (MGC).</title>
        <authorList>
            <consortium name="The MGC Project Team"/>
        </authorList>
    </citation>
    <scope>NUCLEOTIDE SEQUENCE [LARGE SCALE MRNA]</scope>
    <source>
        <tissue>Kidney</tissue>
    </source>
</reference>
<keyword id="KW-1185">Reference proteome</keyword>
<keyword id="KW-0964">Secreted</keyword>
<keyword id="KW-0732">Signal</keyword>
<protein>
    <recommendedName>
        <fullName>Kidney androgen-regulated protein</fullName>
        <shortName>ARP</shortName>
        <shortName>KAP</shortName>
    </recommendedName>
</protein>
<organism>
    <name type="scientific">Mus musculus</name>
    <name type="common">Mouse</name>
    <dbReference type="NCBI Taxonomy" id="10090"/>
    <lineage>
        <taxon>Eukaryota</taxon>
        <taxon>Metazoa</taxon>
        <taxon>Chordata</taxon>
        <taxon>Craniata</taxon>
        <taxon>Vertebrata</taxon>
        <taxon>Euteleostomi</taxon>
        <taxon>Mammalia</taxon>
        <taxon>Eutheria</taxon>
        <taxon>Euarchontoglires</taxon>
        <taxon>Glires</taxon>
        <taxon>Rodentia</taxon>
        <taxon>Myomorpha</taxon>
        <taxon>Muroidea</taxon>
        <taxon>Muridae</taxon>
        <taxon>Murinae</taxon>
        <taxon>Mus</taxon>
        <taxon>Mus</taxon>
    </lineage>
</organism>
<feature type="signal peptide" evidence="1">
    <location>
        <begin position="1"/>
        <end position="18"/>
    </location>
</feature>
<feature type="chain" id="PRO_0000020736" description="Kidney androgen-regulated protein">
    <location>
        <begin position="19"/>
        <end position="121"/>
    </location>
</feature>
<sequence length="121" mass="13263">MMLFKVLVITVFCGLTVAFPLSELVSINKELQNSIIDLLNSVFDQLGSYRGTKAPLEDYTDDDLSTDSEQIMDFTPAANKQNSEFSTDVETVSSGFLEEFTENTDITVKIPLAGNPVSPTS</sequence>
<proteinExistence type="evidence at transcript level"/>